<reference key="1">
    <citation type="submission" date="1997-07" db="EMBL/GenBank/DDBJ databases">
        <title>Sequence analysis of the 70kb region between 17 and 23 degree of the Bacillus subtilis chromosome.</title>
        <authorList>
            <person name="Haga K."/>
            <person name="Liu H."/>
            <person name="Yasumoto K."/>
            <person name="Takahashi H."/>
            <person name="Yoshikawa H."/>
        </authorList>
    </citation>
    <scope>NUCLEOTIDE SEQUENCE [GENOMIC DNA]</scope>
    <source>
        <strain>168</strain>
    </source>
</reference>
<reference key="2">
    <citation type="journal article" date="1997" name="Nature">
        <title>The complete genome sequence of the Gram-positive bacterium Bacillus subtilis.</title>
        <authorList>
            <person name="Kunst F."/>
            <person name="Ogasawara N."/>
            <person name="Moszer I."/>
            <person name="Albertini A.M."/>
            <person name="Alloni G."/>
            <person name="Azevedo V."/>
            <person name="Bertero M.G."/>
            <person name="Bessieres P."/>
            <person name="Bolotin A."/>
            <person name="Borchert S."/>
            <person name="Borriss R."/>
            <person name="Boursier L."/>
            <person name="Brans A."/>
            <person name="Braun M."/>
            <person name="Brignell S.C."/>
            <person name="Bron S."/>
            <person name="Brouillet S."/>
            <person name="Bruschi C.V."/>
            <person name="Caldwell B."/>
            <person name="Capuano V."/>
            <person name="Carter N.M."/>
            <person name="Choi S.-K."/>
            <person name="Codani J.-J."/>
            <person name="Connerton I.F."/>
            <person name="Cummings N.J."/>
            <person name="Daniel R.A."/>
            <person name="Denizot F."/>
            <person name="Devine K.M."/>
            <person name="Duesterhoeft A."/>
            <person name="Ehrlich S.D."/>
            <person name="Emmerson P.T."/>
            <person name="Entian K.-D."/>
            <person name="Errington J."/>
            <person name="Fabret C."/>
            <person name="Ferrari E."/>
            <person name="Foulger D."/>
            <person name="Fritz C."/>
            <person name="Fujita M."/>
            <person name="Fujita Y."/>
            <person name="Fuma S."/>
            <person name="Galizzi A."/>
            <person name="Galleron N."/>
            <person name="Ghim S.-Y."/>
            <person name="Glaser P."/>
            <person name="Goffeau A."/>
            <person name="Golightly E.J."/>
            <person name="Grandi G."/>
            <person name="Guiseppi G."/>
            <person name="Guy B.J."/>
            <person name="Haga K."/>
            <person name="Haiech J."/>
            <person name="Harwood C.R."/>
            <person name="Henaut A."/>
            <person name="Hilbert H."/>
            <person name="Holsappel S."/>
            <person name="Hosono S."/>
            <person name="Hullo M.-F."/>
            <person name="Itaya M."/>
            <person name="Jones L.-M."/>
            <person name="Joris B."/>
            <person name="Karamata D."/>
            <person name="Kasahara Y."/>
            <person name="Klaerr-Blanchard M."/>
            <person name="Klein C."/>
            <person name="Kobayashi Y."/>
            <person name="Koetter P."/>
            <person name="Koningstein G."/>
            <person name="Krogh S."/>
            <person name="Kumano M."/>
            <person name="Kurita K."/>
            <person name="Lapidus A."/>
            <person name="Lardinois S."/>
            <person name="Lauber J."/>
            <person name="Lazarevic V."/>
            <person name="Lee S.-M."/>
            <person name="Levine A."/>
            <person name="Liu H."/>
            <person name="Masuda S."/>
            <person name="Mauel C."/>
            <person name="Medigue C."/>
            <person name="Medina N."/>
            <person name="Mellado R.P."/>
            <person name="Mizuno M."/>
            <person name="Moestl D."/>
            <person name="Nakai S."/>
            <person name="Noback M."/>
            <person name="Noone D."/>
            <person name="O'Reilly M."/>
            <person name="Ogawa K."/>
            <person name="Ogiwara A."/>
            <person name="Oudega B."/>
            <person name="Park S.-H."/>
            <person name="Parro V."/>
            <person name="Pohl T.M."/>
            <person name="Portetelle D."/>
            <person name="Porwollik S."/>
            <person name="Prescott A.M."/>
            <person name="Presecan E."/>
            <person name="Pujic P."/>
            <person name="Purnelle B."/>
            <person name="Rapoport G."/>
            <person name="Rey M."/>
            <person name="Reynolds S."/>
            <person name="Rieger M."/>
            <person name="Rivolta C."/>
            <person name="Rocha E."/>
            <person name="Roche B."/>
            <person name="Rose M."/>
            <person name="Sadaie Y."/>
            <person name="Sato T."/>
            <person name="Scanlan E."/>
            <person name="Schleich S."/>
            <person name="Schroeter R."/>
            <person name="Scoffone F."/>
            <person name="Sekiguchi J."/>
            <person name="Sekowska A."/>
            <person name="Seror S.J."/>
            <person name="Serror P."/>
            <person name="Shin B.-S."/>
            <person name="Soldo B."/>
            <person name="Sorokin A."/>
            <person name="Tacconi E."/>
            <person name="Takagi T."/>
            <person name="Takahashi H."/>
            <person name="Takemaru K."/>
            <person name="Takeuchi M."/>
            <person name="Tamakoshi A."/>
            <person name="Tanaka T."/>
            <person name="Terpstra P."/>
            <person name="Tognoni A."/>
            <person name="Tosato V."/>
            <person name="Uchiyama S."/>
            <person name="Vandenbol M."/>
            <person name="Vannier F."/>
            <person name="Vassarotti A."/>
            <person name="Viari A."/>
            <person name="Wambutt R."/>
            <person name="Wedler E."/>
            <person name="Wedler H."/>
            <person name="Weitzenegger T."/>
            <person name="Winters P."/>
            <person name="Wipat A."/>
            <person name="Yamamoto H."/>
            <person name="Yamane K."/>
            <person name="Yasumoto K."/>
            <person name="Yata K."/>
            <person name="Yoshida K."/>
            <person name="Yoshikawa H.-F."/>
            <person name="Zumstein E."/>
            <person name="Yoshikawa H."/>
            <person name="Danchin A."/>
        </authorList>
    </citation>
    <scope>NUCLEOTIDE SEQUENCE [LARGE SCALE GENOMIC DNA]</scope>
    <source>
        <strain>168</strain>
    </source>
</reference>
<reference key="3">
    <citation type="journal article" date="2009" name="Microbiology">
        <title>From a consortium sequence to a unified sequence: the Bacillus subtilis 168 reference genome a decade later.</title>
        <authorList>
            <person name="Barbe V."/>
            <person name="Cruveiller S."/>
            <person name="Kunst F."/>
            <person name="Lenoble P."/>
            <person name="Meurice G."/>
            <person name="Sekowska A."/>
            <person name="Vallenet D."/>
            <person name="Wang T."/>
            <person name="Moszer I."/>
            <person name="Medigue C."/>
            <person name="Danchin A."/>
        </authorList>
    </citation>
    <scope>SEQUENCE REVISION TO 205; 216; 396; 412 AND 447</scope>
</reference>
<reference key="4">
    <citation type="journal article" date="2003" name="Science">
        <title>Cannibalism by sporulating bacteria.</title>
        <authorList>
            <person name="Gonzalez-Pastor J.E."/>
            <person name="Hobbs E.C."/>
            <person name="Losick R."/>
        </authorList>
    </citation>
    <scope>POSSIBLE FUNCTION IN SKFA SYNTHESIS</scope>
    <scope>INDUCTION</scope>
    <scope>DISRUPTION PHENOTYPE</scope>
    <source>
        <strain>168 / PY79</strain>
    </source>
</reference>
<reference key="5">
    <citation type="journal article" date="2007" name="J. Bacteriol.">
        <title>Abh and AbrB control of Bacillus subtilis antimicrobial gene expression.</title>
        <authorList>
            <person name="Strauch M.A."/>
            <person name="Bobay B.G."/>
            <person name="Cavanagh J."/>
            <person name="Yao F."/>
            <person name="Wilson A."/>
            <person name="Le Breton Y."/>
        </authorList>
    </citation>
    <scope>REPRESSION BY ABRB AND ABH</scope>
</reference>
<name>SKFF_BACSU</name>
<feature type="chain" id="PRO_0000312741" description="Putative bacteriocin-SkfA transport system permease protein SkfF">
    <location>
        <begin position="1"/>
        <end position="447"/>
    </location>
</feature>
<feature type="topological domain" description="Cytoplasmic" evidence="1">
    <location>
        <begin position="1"/>
        <end position="3"/>
    </location>
</feature>
<feature type="transmembrane region" description="Helical" evidence="1">
    <location>
        <begin position="4"/>
        <end position="22"/>
    </location>
</feature>
<feature type="topological domain" description="Extracellular" evidence="1">
    <location>
        <begin position="23"/>
        <end position="29"/>
    </location>
</feature>
<feature type="transmembrane region" description="Helical" evidence="1">
    <location>
        <begin position="30"/>
        <end position="50"/>
    </location>
</feature>
<feature type="topological domain" description="Cytoplasmic" evidence="1">
    <location>
        <begin position="51"/>
        <end position="59"/>
    </location>
</feature>
<feature type="transmembrane region" description="Helical" evidence="1">
    <location>
        <begin position="60"/>
        <end position="80"/>
    </location>
</feature>
<feature type="topological domain" description="Extracellular" evidence="1">
    <location>
        <begin position="81"/>
        <end position="85"/>
    </location>
</feature>
<feature type="transmembrane region" description="Helical" evidence="1">
    <location>
        <begin position="86"/>
        <end position="104"/>
    </location>
</feature>
<feature type="topological domain" description="Cytoplasmic" evidence="1">
    <location>
        <begin position="105"/>
        <end position="113"/>
    </location>
</feature>
<feature type="transmembrane region" description="Helical" evidence="1">
    <location>
        <begin position="114"/>
        <end position="134"/>
    </location>
</feature>
<feature type="topological domain" description="Extracellular" evidence="1">
    <location>
        <begin position="135"/>
        <end position="141"/>
    </location>
</feature>
<feature type="transmembrane region" description="Helical" evidence="1">
    <location>
        <begin position="142"/>
        <end position="160"/>
    </location>
</feature>
<feature type="topological domain" description="Cytoplasmic" evidence="1">
    <location>
        <begin position="161"/>
        <end position="189"/>
    </location>
</feature>
<feature type="transmembrane region" description="Helical" evidence="1">
    <location>
        <begin position="190"/>
        <end position="208"/>
    </location>
</feature>
<feature type="topological domain" description="Extracellular" evidence="1">
    <location>
        <begin position="209"/>
        <end position="247"/>
    </location>
</feature>
<feature type="transmembrane region" description="Helical" evidence="1">
    <location>
        <begin position="248"/>
        <end position="268"/>
    </location>
</feature>
<feature type="topological domain" description="Cytoplasmic" evidence="1">
    <location>
        <begin position="269"/>
        <end position="297"/>
    </location>
</feature>
<feature type="transmembrane region" description="Helical" evidence="1">
    <location>
        <begin position="298"/>
        <end position="318"/>
    </location>
</feature>
<feature type="topological domain" description="Extracellular" evidence="1">
    <location>
        <begin position="319"/>
        <end position="341"/>
    </location>
</feature>
<feature type="transmembrane region" description="Helical" evidence="1">
    <location>
        <begin position="342"/>
        <end position="360"/>
    </location>
</feature>
<feature type="topological domain" description="Cytoplasmic" evidence="1">
    <location>
        <begin position="361"/>
        <end position="363"/>
    </location>
</feature>
<feature type="transmembrane region" description="Helical" evidence="1">
    <location>
        <begin position="364"/>
        <end position="382"/>
    </location>
</feature>
<feature type="topological domain" description="Extracellular" evidence="1">
    <location>
        <begin position="383"/>
        <end position="404"/>
    </location>
</feature>
<feature type="transmembrane region" description="Helical" evidence="1">
    <location>
        <begin position="405"/>
        <end position="423"/>
    </location>
</feature>
<feature type="topological domain" description="Cytoplasmic" evidence="1">
    <location>
        <begin position="424"/>
        <end position="426"/>
    </location>
</feature>
<feature type="transmembrane region" description="Helical" evidence="1">
    <location>
        <begin position="427"/>
        <end position="447"/>
    </location>
</feature>
<feature type="sequence conflict" description="In Ref. 1; BAA33093." evidence="5" ref="1">
    <original>M</original>
    <variation>I</variation>
    <location>
        <position position="205"/>
    </location>
</feature>
<feature type="sequence conflict" description="In Ref. 1; BAA33093." evidence="5" ref="1">
    <original>M</original>
    <variation>I</variation>
    <location>
        <position position="216"/>
    </location>
</feature>
<feature type="sequence conflict" description="In Ref. 1; BAA33093." evidence="5" ref="1">
    <original>L</original>
    <variation>LL</variation>
    <location>
        <position position="396"/>
    </location>
</feature>
<feature type="sequence conflict" description="In Ref. 1; BAA33093." evidence="5" ref="1">
    <original>S</original>
    <variation>T</variation>
    <location>
        <position position="412"/>
    </location>
</feature>
<feature type="sequence conflict" description="In Ref. 1; BAA33093." evidence="5" ref="1">
    <original>R</original>
    <variation>K</variation>
    <location>
        <position position="447"/>
    </location>
</feature>
<organism>
    <name type="scientific">Bacillus subtilis (strain 168)</name>
    <dbReference type="NCBI Taxonomy" id="224308"/>
    <lineage>
        <taxon>Bacteria</taxon>
        <taxon>Bacillati</taxon>
        <taxon>Bacillota</taxon>
        <taxon>Bacilli</taxon>
        <taxon>Bacillales</taxon>
        <taxon>Bacillaceae</taxon>
        <taxon>Bacillus</taxon>
    </lineage>
</organism>
<sequence length="447" mass="51817">MPFLIMLLFVGAIGFQVSFVSRSTTWDMSIAGWVLTGVFILYTAFGLFSNRLPSQMADIIWLYGTATSFSKVVYSVLFFSVTWKALLWIISAIFGDVLIVLLSGDHINLLGRSIIFVGLFFIAEVWLMSVSCARTVKKMKRVYVLVFLLMLGIYSICLYRFFFLQHSSGIWESIARFISGVGLVFDTLSPLYVVVFIGIITVSFMTIAFTSRQVEMKESLVKEAEFWEEFQERQFGSGQIIQKPKTTWWGLQGLNGIWSFLWLELLLFKKYLFFHSIHTVMLSGVFYVVIFMYPEWFYLLFFLIVSAVMLSSYYSGIVRHSQSGTLHLFPGALWKKIIILELTNTVWLYILYCVSITFMAVGNLVYWYIYGLGIYIWFMTIRLFAFTHTNRNDIKLSLPQYYKSFFMALGLSGICLYVIHLLTADWYTLVVVVCIGSLSWCLFYRFR</sequence>
<dbReference type="EMBL" id="AB006424">
    <property type="protein sequence ID" value="BAA33093.1"/>
    <property type="molecule type" value="Genomic_DNA"/>
</dbReference>
<dbReference type="EMBL" id="AL009126">
    <property type="protein sequence ID" value="CAB11990.2"/>
    <property type="molecule type" value="Genomic_DNA"/>
</dbReference>
<dbReference type="PIR" id="A69747">
    <property type="entry name" value="A69747"/>
</dbReference>
<dbReference type="RefSeq" id="NP_388078.2">
    <property type="nucleotide sequence ID" value="NC_000964.3"/>
</dbReference>
<dbReference type="RefSeq" id="WP_010886391.1">
    <property type="nucleotide sequence ID" value="NC_000964.3"/>
</dbReference>
<dbReference type="SMR" id="O31428"/>
<dbReference type="FunCoup" id="O31428">
    <property type="interactions" value="94"/>
</dbReference>
<dbReference type="STRING" id="224308.BSU01960"/>
<dbReference type="TCDB" id="3.A.1.128.1">
    <property type="family name" value="the atp-binding cassette (abc) superfamily"/>
</dbReference>
<dbReference type="PaxDb" id="224308-BSU01960"/>
<dbReference type="EnsemblBacteria" id="CAB11990">
    <property type="protein sequence ID" value="CAB11990"/>
    <property type="gene ID" value="BSU_01960"/>
</dbReference>
<dbReference type="GeneID" id="938494"/>
<dbReference type="KEGG" id="bsu:BSU01960"/>
<dbReference type="PATRIC" id="fig|224308.43.peg.198"/>
<dbReference type="eggNOG" id="ENOG503383K">
    <property type="taxonomic scope" value="Bacteria"/>
</dbReference>
<dbReference type="InParanoid" id="O31428"/>
<dbReference type="OrthoDB" id="2928291at2"/>
<dbReference type="BioCyc" id="BSUB:BSU01960-MONOMER"/>
<dbReference type="Proteomes" id="UP000001570">
    <property type="component" value="Chromosome"/>
</dbReference>
<dbReference type="GO" id="GO:0005886">
    <property type="term" value="C:plasma membrane"/>
    <property type="evidence" value="ECO:0007669"/>
    <property type="project" value="UniProtKB-SubCell"/>
</dbReference>
<dbReference type="GO" id="GO:0030152">
    <property type="term" value="P:bacteriocin biosynthetic process"/>
    <property type="evidence" value="ECO:0007669"/>
    <property type="project" value="UniProtKB-KW"/>
</dbReference>
<dbReference type="InterPro" id="IPR030920">
    <property type="entry name" value="SkfF"/>
</dbReference>
<dbReference type="NCBIfam" id="TIGR04405">
    <property type="entry name" value="SkfF"/>
    <property type="match status" value="1"/>
</dbReference>
<proteinExistence type="evidence at protein level"/>
<keyword id="KW-0045">Antibiotic biosynthesis</keyword>
<keyword id="KW-0871">Bacteriocin biosynthesis</keyword>
<keyword id="KW-1003">Cell membrane</keyword>
<keyword id="KW-0472">Membrane</keyword>
<keyword id="KW-1185">Reference proteome</keyword>
<keyword id="KW-0812">Transmembrane</keyword>
<keyword id="KW-1133">Transmembrane helix</keyword>
<gene>
    <name evidence="4" type="primary">skfF</name>
    <name type="synonym">ybdB</name>
    <name type="ordered locus">BSU01960</name>
</gene>
<comment type="function">
    <text evidence="6">Probably part of the ABC transporter SkfEF involved in the export of the bacteriocin SKF. Probably responsible for the translocation of bacteriocin SkfA across the membrane.</text>
</comment>
<comment type="subcellular location">
    <subcellularLocation>
        <location evidence="5">Cell membrane</location>
        <topology evidence="5">Multi-pass membrane protein</topology>
    </subcellularLocation>
</comment>
<comment type="induction">
    <text evidence="2 3">By Spo0A (PubMed:12817086) and PhoP, during nutrient starvation, especially phosphate starvation. Repressed by AbrB during normal growth when nutrients are plentiful, in association with the transcriptional repressor Abh.</text>
</comment>
<comment type="disruption phenotype">
    <text evidence="2">When the skfA-skfB-skfC-skfE-skfF-skfG-skfH operon is deleted, increased rate of spore formation; a double operon deletion (sdpA-sdpC plus skfA-skfH) makes spores even faster (PubMed:12817086).</text>
</comment>
<comment type="miscellaneous">
    <text evidence="2">Accelerated cannibalism by skf- cells is seen on solid media but not in liquid media.</text>
</comment>
<evidence type="ECO:0000255" key="1"/>
<evidence type="ECO:0000269" key="2">
    <source>
    </source>
</evidence>
<evidence type="ECO:0000269" key="3">
    <source>
    </source>
</evidence>
<evidence type="ECO:0000303" key="4">
    <source>
    </source>
</evidence>
<evidence type="ECO:0000305" key="5"/>
<evidence type="ECO:0000305" key="6">
    <source>
    </source>
</evidence>
<accession>O31428</accession>
<accession>Q7DL61</accession>
<protein>
    <recommendedName>
        <fullName>Putative bacteriocin-SkfA transport system permease protein SkfF</fullName>
    </recommendedName>
</protein>